<sequence length="120" mass="13148">MKMAVLVRTDLDMGKGKIAAQVAHAAVSLVLEIVQKRSKAEWKEWLEMWINQGQPKIVLKVKNLDELLEKYNKALQSGLPATIIQDAGKTQIEPGTITCAGIGPGPEEMIDNITGDLKLL</sequence>
<accession>Q877G5</accession>
<accession>Q4JAN6</accession>
<protein>
    <recommendedName>
        <fullName evidence="1">Peptidyl-tRNA hydrolase</fullName>
        <shortName evidence="1">PTH</shortName>
        <ecNumber evidence="1">3.1.1.29</ecNumber>
    </recommendedName>
</protein>
<keyword id="KW-0963">Cytoplasm</keyword>
<keyword id="KW-0378">Hydrolase</keyword>
<keyword id="KW-1185">Reference proteome</keyword>
<proteinExistence type="inferred from homology"/>
<feature type="chain" id="PRO_0000120303" description="Peptidyl-tRNA hydrolase">
    <location>
        <begin position="1"/>
        <end position="120"/>
    </location>
</feature>
<gene>
    <name evidence="1" type="primary">pth</name>
    <name type="ordered locus">Saci_0770</name>
</gene>
<evidence type="ECO:0000255" key="1">
    <source>
        <dbReference type="HAMAP-Rule" id="MF_00628"/>
    </source>
</evidence>
<evidence type="ECO:0000305" key="2"/>
<dbReference type="EC" id="3.1.1.29" evidence="1"/>
<dbReference type="EMBL" id="AY255679">
    <property type="protein sequence ID" value="AAP13474.1"/>
    <property type="molecule type" value="Genomic_DNA"/>
</dbReference>
<dbReference type="EMBL" id="CP000077">
    <property type="protein sequence ID" value="AAY80143.1"/>
    <property type="status" value="ALT_INIT"/>
    <property type="molecule type" value="Genomic_DNA"/>
</dbReference>
<dbReference type="RefSeq" id="WP_015385493.1">
    <property type="nucleotide sequence ID" value="NC_007181.1"/>
</dbReference>
<dbReference type="SMR" id="Q877G5"/>
<dbReference type="STRING" id="330779.Saci_0770"/>
<dbReference type="GeneID" id="14551286"/>
<dbReference type="KEGG" id="sai:Saci_0770"/>
<dbReference type="PATRIC" id="fig|330779.12.peg.736"/>
<dbReference type="eggNOG" id="arCOG04228">
    <property type="taxonomic scope" value="Archaea"/>
</dbReference>
<dbReference type="HOGENOM" id="CLU_073661_2_2_2"/>
<dbReference type="Proteomes" id="UP000001018">
    <property type="component" value="Chromosome"/>
</dbReference>
<dbReference type="GO" id="GO:0005829">
    <property type="term" value="C:cytosol"/>
    <property type="evidence" value="ECO:0007669"/>
    <property type="project" value="TreeGrafter"/>
</dbReference>
<dbReference type="GO" id="GO:0004045">
    <property type="term" value="F:peptidyl-tRNA hydrolase activity"/>
    <property type="evidence" value="ECO:0007669"/>
    <property type="project" value="UniProtKB-UniRule"/>
</dbReference>
<dbReference type="GO" id="GO:0006412">
    <property type="term" value="P:translation"/>
    <property type="evidence" value="ECO:0007669"/>
    <property type="project" value="UniProtKB-UniRule"/>
</dbReference>
<dbReference type="CDD" id="cd02430">
    <property type="entry name" value="PTH2"/>
    <property type="match status" value="1"/>
</dbReference>
<dbReference type="FunFam" id="3.40.1490.10:FF:000001">
    <property type="entry name" value="Peptidyl-tRNA hydrolase 2"/>
    <property type="match status" value="1"/>
</dbReference>
<dbReference type="Gene3D" id="3.40.1490.10">
    <property type="entry name" value="Bit1"/>
    <property type="match status" value="1"/>
</dbReference>
<dbReference type="HAMAP" id="MF_00628">
    <property type="entry name" value="Pept_tRNA_hydro_arch"/>
    <property type="match status" value="1"/>
</dbReference>
<dbReference type="InterPro" id="IPR023476">
    <property type="entry name" value="Pep_tRNA_hydro_II_dom_sf"/>
</dbReference>
<dbReference type="InterPro" id="IPR034759">
    <property type="entry name" value="Pept_tRNA_hydro_arch"/>
</dbReference>
<dbReference type="InterPro" id="IPR002833">
    <property type="entry name" value="PTH2"/>
</dbReference>
<dbReference type="NCBIfam" id="TIGR00283">
    <property type="entry name" value="arch_pth2"/>
    <property type="match status" value="1"/>
</dbReference>
<dbReference type="NCBIfam" id="NF003314">
    <property type="entry name" value="PRK04322.1"/>
    <property type="match status" value="1"/>
</dbReference>
<dbReference type="PANTHER" id="PTHR12649">
    <property type="entry name" value="PEPTIDYL-TRNA HYDROLASE 2"/>
    <property type="match status" value="1"/>
</dbReference>
<dbReference type="PANTHER" id="PTHR12649:SF11">
    <property type="entry name" value="PEPTIDYL-TRNA HYDROLASE 2, MITOCHONDRIAL"/>
    <property type="match status" value="1"/>
</dbReference>
<dbReference type="Pfam" id="PF01981">
    <property type="entry name" value="PTH2"/>
    <property type="match status" value="1"/>
</dbReference>
<dbReference type="SUPFAM" id="SSF102462">
    <property type="entry name" value="Peptidyl-tRNA hydrolase II"/>
    <property type="match status" value="1"/>
</dbReference>
<name>PTH_SULAC</name>
<organism>
    <name type="scientific">Sulfolobus acidocaldarius (strain ATCC 33909 / DSM 639 / JCM 8929 / NBRC 15157 / NCIMB 11770)</name>
    <dbReference type="NCBI Taxonomy" id="330779"/>
    <lineage>
        <taxon>Archaea</taxon>
        <taxon>Thermoproteota</taxon>
        <taxon>Thermoprotei</taxon>
        <taxon>Sulfolobales</taxon>
        <taxon>Sulfolobaceae</taxon>
        <taxon>Sulfolobus</taxon>
    </lineage>
</organism>
<reference key="1">
    <citation type="submission" date="2003-03" db="EMBL/GenBank/DDBJ databases">
        <title>AAA family ATPase in the archeae Sulfolobus acidocaldarius.</title>
        <authorList>
            <person name="Esnault C."/>
            <person name="Trehin A."/>
            <person name="Duguet M."/>
        </authorList>
    </citation>
    <scope>NUCLEOTIDE SEQUENCE [GENOMIC DNA]</scope>
    <source>
        <strain>ATCC 33909 / DSM 639 / JCM 8929 / NBRC 15157 / NCIMB 11770</strain>
    </source>
</reference>
<reference key="2">
    <citation type="journal article" date="2005" name="J. Bacteriol.">
        <title>The genome of Sulfolobus acidocaldarius, a model organism of the Crenarchaeota.</title>
        <authorList>
            <person name="Chen L."/>
            <person name="Bruegger K."/>
            <person name="Skovgaard M."/>
            <person name="Redder P."/>
            <person name="She Q."/>
            <person name="Torarinsson E."/>
            <person name="Greve B."/>
            <person name="Awayez M."/>
            <person name="Zibat A."/>
            <person name="Klenk H.-P."/>
            <person name="Garrett R.A."/>
        </authorList>
    </citation>
    <scope>NUCLEOTIDE SEQUENCE [LARGE SCALE GENOMIC DNA]</scope>
    <source>
        <strain>ATCC 33909 / DSM 639 / JCM 8929 / NBRC 15157 / NCIMB 11770</strain>
    </source>
</reference>
<comment type="function">
    <text evidence="1">The natural substrate for this enzyme may be peptidyl-tRNAs which drop off the ribosome during protein synthesis.</text>
</comment>
<comment type="catalytic activity">
    <reaction evidence="1">
        <text>an N-acyl-L-alpha-aminoacyl-tRNA + H2O = an N-acyl-L-amino acid + a tRNA + H(+)</text>
        <dbReference type="Rhea" id="RHEA:54448"/>
        <dbReference type="Rhea" id="RHEA-COMP:10123"/>
        <dbReference type="Rhea" id="RHEA-COMP:13883"/>
        <dbReference type="ChEBI" id="CHEBI:15377"/>
        <dbReference type="ChEBI" id="CHEBI:15378"/>
        <dbReference type="ChEBI" id="CHEBI:59874"/>
        <dbReference type="ChEBI" id="CHEBI:78442"/>
        <dbReference type="ChEBI" id="CHEBI:138191"/>
        <dbReference type="EC" id="3.1.1.29"/>
    </reaction>
</comment>
<comment type="subcellular location">
    <subcellularLocation>
        <location evidence="1">Cytoplasm</location>
    </subcellularLocation>
</comment>
<comment type="similarity">
    <text evidence="1">Belongs to the PTH2 family.</text>
</comment>
<comment type="sequence caution" evidence="2">
    <conflict type="erroneous initiation">
        <sequence resource="EMBL-CDS" id="AAY80143"/>
    </conflict>
</comment>